<gene>
    <name evidence="1" type="primary">carB</name>
    <name type="ordered locus">BCG9842_B1257</name>
</gene>
<organism>
    <name type="scientific">Bacillus cereus (strain G9842)</name>
    <dbReference type="NCBI Taxonomy" id="405531"/>
    <lineage>
        <taxon>Bacteria</taxon>
        <taxon>Bacillati</taxon>
        <taxon>Bacillota</taxon>
        <taxon>Bacilli</taxon>
        <taxon>Bacillales</taxon>
        <taxon>Bacillaceae</taxon>
        <taxon>Bacillus</taxon>
        <taxon>Bacillus cereus group</taxon>
    </lineage>
</organism>
<name>CARB_BACC2</name>
<dbReference type="EC" id="6.3.4.16" evidence="1"/>
<dbReference type="EC" id="6.3.5.5" evidence="1"/>
<dbReference type="EMBL" id="CP001186">
    <property type="protein sequence ID" value="ACK94305.1"/>
    <property type="molecule type" value="Genomic_DNA"/>
</dbReference>
<dbReference type="RefSeq" id="WP_001126139.1">
    <property type="nucleotide sequence ID" value="NC_011772.1"/>
</dbReference>
<dbReference type="SMR" id="B7IUP6"/>
<dbReference type="KEGG" id="bcg:BCG9842_B1257"/>
<dbReference type="HOGENOM" id="CLU_000513_1_0_9"/>
<dbReference type="UniPathway" id="UPA00068">
    <property type="reaction ID" value="UER00171"/>
</dbReference>
<dbReference type="UniPathway" id="UPA00070">
    <property type="reaction ID" value="UER00115"/>
</dbReference>
<dbReference type="Proteomes" id="UP000006744">
    <property type="component" value="Chromosome"/>
</dbReference>
<dbReference type="GO" id="GO:0005737">
    <property type="term" value="C:cytoplasm"/>
    <property type="evidence" value="ECO:0007669"/>
    <property type="project" value="TreeGrafter"/>
</dbReference>
<dbReference type="GO" id="GO:0005524">
    <property type="term" value="F:ATP binding"/>
    <property type="evidence" value="ECO:0007669"/>
    <property type="project" value="UniProtKB-UniRule"/>
</dbReference>
<dbReference type="GO" id="GO:0004087">
    <property type="term" value="F:carbamoyl-phosphate synthase (ammonia) activity"/>
    <property type="evidence" value="ECO:0007669"/>
    <property type="project" value="RHEA"/>
</dbReference>
<dbReference type="GO" id="GO:0004088">
    <property type="term" value="F:carbamoyl-phosphate synthase (glutamine-hydrolyzing) activity"/>
    <property type="evidence" value="ECO:0007669"/>
    <property type="project" value="UniProtKB-UniRule"/>
</dbReference>
<dbReference type="GO" id="GO:0046872">
    <property type="term" value="F:metal ion binding"/>
    <property type="evidence" value="ECO:0007669"/>
    <property type="project" value="UniProtKB-KW"/>
</dbReference>
<dbReference type="GO" id="GO:0044205">
    <property type="term" value="P:'de novo' UMP biosynthetic process"/>
    <property type="evidence" value="ECO:0007669"/>
    <property type="project" value="UniProtKB-UniRule"/>
</dbReference>
<dbReference type="GO" id="GO:0006541">
    <property type="term" value="P:glutamine metabolic process"/>
    <property type="evidence" value="ECO:0007669"/>
    <property type="project" value="TreeGrafter"/>
</dbReference>
<dbReference type="GO" id="GO:0006526">
    <property type="term" value="P:L-arginine biosynthetic process"/>
    <property type="evidence" value="ECO:0007669"/>
    <property type="project" value="UniProtKB-UniRule"/>
</dbReference>
<dbReference type="CDD" id="cd01424">
    <property type="entry name" value="MGS_CPS_II"/>
    <property type="match status" value="1"/>
</dbReference>
<dbReference type="FunFam" id="1.10.1030.10:FF:000002">
    <property type="entry name" value="Carbamoyl-phosphate synthase large chain"/>
    <property type="match status" value="1"/>
</dbReference>
<dbReference type="FunFam" id="3.30.1490.20:FF:000001">
    <property type="entry name" value="Carbamoyl-phosphate synthase large chain"/>
    <property type="match status" value="1"/>
</dbReference>
<dbReference type="FunFam" id="3.30.470.20:FF:000001">
    <property type="entry name" value="Carbamoyl-phosphate synthase large chain"/>
    <property type="match status" value="1"/>
</dbReference>
<dbReference type="FunFam" id="3.30.470.20:FF:000026">
    <property type="entry name" value="Carbamoyl-phosphate synthase large chain"/>
    <property type="match status" value="1"/>
</dbReference>
<dbReference type="FunFam" id="3.40.50.1380:FF:000011">
    <property type="entry name" value="Carbamoyl-phosphate synthase large chain"/>
    <property type="match status" value="1"/>
</dbReference>
<dbReference type="FunFam" id="3.40.50.20:FF:000001">
    <property type="entry name" value="Carbamoyl-phosphate synthase large chain"/>
    <property type="match status" value="2"/>
</dbReference>
<dbReference type="Gene3D" id="3.40.50.20">
    <property type="match status" value="2"/>
</dbReference>
<dbReference type="Gene3D" id="3.30.1490.20">
    <property type="entry name" value="ATP-grasp fold, A domain"/>
    <property type="match status" value="1"/>
</dbReference>
<dbReference type="Gene3D" id="3.30.470.20">
    <property type="entry name" value="ATP-grasp fold, B domain"/>
    <property type="match status" value="2"/>
</dbReference>
<dbReference type="Gene3D" id="1.10.1030.10">
    <property type="entry name" value="Carbamoyl-phosphate synthetase, large subunit oligomerisation domain"/>
    <property type="match status" value="1"/>
</dbReference>
<dbReference type="Gene3D" id="3.40.50.1380">
    <property type="entry name" value="Methylglyoxal synthase-like domain"/>
    <property type="match status" value="1"/>
</dbReference>
<dbReference type="HAMAP" id="MF_01210_A">
    <property type="entry name" value="CPSase_L_chain_A"/>
    <property type="match status" value="1"/>
</dbReference>
<dbReference type="HAMAP" id="MF_01210_B">
    <property type="entry name" value="CPSase_L_chain_B"/>
    <property type="match status" value="1"/>
</dbReference>
<dbReference type="InterPro" id="IPR011761">
    <property type="entry name" value="ATP-grasp"/>
</dbReference>
<dbReference type="InterPro" id="IPR013815">
    <property type="entry name" value="ATP_grasp_subdomain_1"/>
</dbReference>
<dbReference type="InterPro" id="IPR006275">
    <property type="entry name" value="CarbamoylP_synth_lsu"/>
</dbReference>
<dbReference type="InterPro" id="IPR005480">
    <property type="entry name" value="CarbamoylP_synth_lsu_oligo"/>
</dbReference>
<dbReference type="InterPro" id="IPR036897">
    <property type="entry name" value="CarbamoylP_synth_lsu_oligo_sf"/>
</dbReference>
<dbReference type="InterPro" id="IPR005479">
    <property type="entry name" value="CbamoylP_synth_lsu-like_ATP-bd"/>
</dbReference>
<dbReference type="InterPro" id="IPR005483">
    <property type="entry name" value="CbamoylP_synth_lsu_CPSase_dom"/>
</dbReference>
<dbReference type="InterPro" id="IPR011607">
    <property type="entry name" value="MGS-like_dom"/>
</dbReference>
<dbReference type="InterPro" id="IPR036914">
    <property type="entry name" value="MGS-like_dom_sf"/>
</dbReference>
<dbReference type="InterPro" id="IPR033937">
    <property type="entry name" value="MGS_CPS_CarB"/>
</dbReference>
<dbReference type="InterPro" id="IPR016185">
    <property type="entry name" value="PreATP-grasp_dom_sf"/>
</dbReference>
<dbReference type="NCBIfam" id="TIGR01369">
    <property type="entry name" value="CPSaseII_lrg"/>
    <property type="match status" value="1"/>
</dbReference>
<dbReference type="NCBIfam" id="NF003671">
    <property type="entry name" value="PRK05294.1"/>
    <property type="match status" value="1"/>
</dbReference>
<dbReference type="NCBIfam" id="NF009455">
    <property type="entry name" value="PRK12815.1"/>
    <property type="match status" value="1"/>
</dbReference>
<dbReference type="PANTHER" id="PTHR11405:SF53">
    <property type="entry name" value="CARBAMOYL-PHOSPHATE SYNTHASE [AMMONIA], MITOCHONDRIAL"/>
    <property type="match status" value="1"/>
</dbReference>
<dbReference type="PANTHER" id="PTHR11405">
    <property type="entry name" value="CARBAMOYLTRANSFERASE FAMILY MEMBER"/>
    <property type="match status" value="1"/>
</dbReference>
<dbReference type="Pfam" id="PF02786">
    <property type="entry name" value="CPSase_L_D2"/>
    <property type="match status" value="2"/>
</dbReference>
<dbReference type="Pfam" id="PF02787">
    <property type="entry name" value="CPSase_L_D3"/>
    <property type="match status" value="1"/>
</dbReference>
<dbReference type="Pfam" id="PF02142">
    <property type="entry name" value="MGS"/>
    <property type="match status" value="1"/>
</dbReference>
<dbReference type="PRINTS" id="PR00098">
    <property type="entry name" value="CPSASE"/>
</dbReference>
<dbReference type="SMART" id="SM01096">
    <property type="entry name" value="CPSase_L_D3"/>
    <property type="match status" value="1"/>
</dbReference>
<dbReference type="SMART" id="SM01209">
    <property type="entry name" value="GARS_A"/>
    <property type="match status" value="1"/>
</dbReference>
<dbReference type="SMART" id="SM00851">
    <property type="entry name" value="MGS"/>
    <property type="match status" value="1"/>
</dbReference>
<dbReference type="SUPFAM" id="SSF48108">
    <property type="entry name" value="Carbamoyl phosphate synthetase, large subunit connection domain"/>
    <property type="match status" value="1"/>
</dbReference>
<dbReference type="SUPFAM" id="SSF56059">
    <property type="entry name" value="Glutathione synthetase ATP-binding domain-like"/>
    <property type="match status" value="2"/>
</dbReference>
<dbReference type="SUPFAM" id="SSF52335">
    <property type="entry name" value="Methylglyoxal synthase-like"/>
    <property type="match status" value="1"/>
</dbReference>
<dbReference type="SUPFAM" id="SSF52440">
    <property type="entry name" value="PreATP-grasp domain"/>
    <property type="match status" value="2"/>
</dbReference>
<dbReference type="PROSITE" id="PS50975">
    <property type="entry name" value="ATP_GRASP"/>
    <property type="match status" value="2"/>
</dbReference>
<dbReference type="PROSITE" id="PS00866">
    <property type="entry name" value="CPSASE_1"/>
    <property type="match status" value="2"/>
</dbReference>
<dbReference type="PROSITE" id="PS00867">
    <property type="entry name" value="CPSASE_2"/>
    <property type="match status" value="2"/>
</dbReference>
<dbReference type="PROSITE" id="PS51855">
    <property type="entry name" value="MGS"/>
    <property type="match status" value="1"/>
</dbReference>
<evidence type="ECO:0000255" key="1">
    <source>
        <dbReference type="HAMAP-Rule" id="MF_01210"/>
    </source>
</evidence>
<accession>B7IUP6</accession>
<protein>
    <recommendedName>
        <fullName evidence="1">Carbamoyl phosphate synthase large chain</fullName>
        <ecNumber evidence="1">6.3.4.16</ecNumber>
        <ecNumber evidence="1">6.3.5.5</ecNumber>
    </recommendedName>
    <alternativeName>
        <fullName evidence="1">Carbamoyl phosphate synthetase ammonia chain</fullName>
    </alternativeName>
</protein>
<reference key="1">
    <citation type="submission" date="2008-10" db="EMBL/GenBank/DDBJ databases">
        <title>Genome sequence of Bacillus cereus G9842.</title>
        <authorList>
            <person name="Dodson R.J."/>
            <person name="Durkin A.S."/>
            <person name="Rosovitz M.J."/>
            <person name="Rasko D.A."/>
            <person name="Hoffmaster A."/>
            <person name="Ravel J."/>
            <person name="Sutton G."/>
        </authorList>
    </citation>
    <scope>NUCLEOTIDE SEQUENCE [LARGE SCALE GENOMIC DNA]</scope>
    <source>
        <strain>G9842</strain>
    </source>
</reference>
<sequence length="1072" mass="118582">MPKRLDINTILVIGSGPIVIGQAAEFDYSGTQACQSLREEGYKVILVNSNPATIMTDTATADKVYIEPLTLEFVSRIIRKERPDAILPTLGGQTGLNMAVELAKSGILEECGVEILGTKLSAIEQAEDRDLFRTLMQELNEPIPSSTIIHTLEEAHEFVKEIGYPVIVRPAFTMGGTGGGICSNEEELIEIVSGGLKHSPVTQCLLEKSIAGCKEIEYEVMRDSNDNAIVVCNMENIDPVGVHTGDSIVVAPSQTLSDREYQMLRNTSLRIIRALGIEGGCNVQLALDPHSFQYYVIEVNPRVSRSSALASKATGYPIAKLAAKIAVGLTLDEIINPVTQKTYACFEPALDYVVSKIPRWPFDKFESANRTLGTQMKATGEVMSIGRNLEQSLLKAVRSLELGVYHLELEHLKELDKETMKKRIIKADDERLFIVAEAIRQGVTKEEINEWCEMDFFFLQKVENIVNMEREVKANVGNMEVLQTAKEMGFSDHYVAAAWNKTEREIYDMRKESNITPVYKMVDTCAAEFESATPYYYSTYGDENESVRTDRKSVVVLGSGPIRIGQGVEFDYATVHSVWAIKEAGYEAIIVNNNPETVSTDFSISDKLYFEPLTIEDVMHIIDLEKPEGVIVQFGGQTAINLAAKLEEHGVKILGTSLEDLDRAEDRDKFEAALTQLGIPQPVGKTATTVEQAVAIAEEIGYPVLVRPSYVLGGRAMEIVYRQEELLHYMKNAVKVHAEHPVLIDRYMVGKEIEVDAISDGENVFIPGIMEHIERAGVHSGDSIGVYPPQSLSEKLKEQIIEHTIALGKGLNIVGLLNIQFVVFKDQVYVIEVNPRASRTVPFLSKITGVPMANVATKVILGQDLVEQGYGTGYHPEEKEVYVKAPVFSFAKLRSVDTTLGPEMKSTGEVMGKDLTLEKALYKGLVASGINIPTHGSVIITVADKDKEEAMEIAKRFHEIGYNLLATAGTAQSLAEQNIPVQVVNKIDSEDYNLLDIIRQGKAQFVINTLTKGKQPARDGFRIRRESVENGVACLTSLDTTRAILRVLESMTFSAHSMKEITQTKRHEVVHA</sequence>
<proteinExistence type="inferred from homology"/>
<keyword id="KW-0028">Amino-acid biosynthesis</keyword>
<keyword id="KW-0055">Arginine biosynthesis</keyword>
<keyword id="KW-0067">ATP-binding</keyword>
<keyword id="KW-0436">Ligase</keyword>
<keyword id="KW-0460">Magnesium</keyword>
<keyword id="KW-0464">Manganese</keyword>
<keyword id="KW-0479">Metal-binding</keyword>
<keyword id="KW-0547">Nucleotide-binding</keyword>
<keyword id="KW-0665">Pyrimidine biosynthesis</keyword>
<keyword id="KW-0677">Repeat</keyword>
<feature type="chain" id="PRO_1000138881" description="Carbamoyl phosphate synthase large chain">
    <location>
        <begin position="1"/>
        <end position="1072"/>
    </location>
</feature>
<feature type="domain" description="ATP-grasp 1" evidence="1">
    <location>
        <begin position="133"/>
        <end position="327"/>
    </location>
</feature>
<feature type="domain" description="ATP-grasp 2" evidence="1">
    <location>
        <begin position="671"/>
        <end position="861"/>
    </location>
</feature>
<feature type="domain" description="MGS-like" evidence="1">
    <location>
        <begin position="930"/>
        <end position="1072"/>
    </location>
</feature>
<feature type="region of interest" description="Carboxyphosphate synthetic domain" evidence="1">
    <location>
        <begin position="1"/>
        <end position="401"/>
    </location>
</feature>
<feature type="region of interest" description="Oligomerization domain" evidence="1">
    <location>
        <begin position="402"/>
        <end position="546"/>
    </location>
</feature>
<feature type="region of interest" description="Carbamoyl phosphate synthetic domain" evidence="1">
    <location>
        <begin position="547"/>
        <end position="929"/>
    </location>
</feature>
<feature type="region of interest" description="Allosteric domain" evidence="1">
    <location>
        <begin position="930"/>
        <end position="1072"/>
    </location>
</feature>
<feature type="binding site" evidence="1">
    <location>
        <position position="129"/>
    </location>
    <ligand>
        <name>ATP</name>
        <dbReference type="ChEBI" id="CHEBI:30616"/>
        <label>1</label>
    </ligand>
</feature>
<feature type="binding site" evidence="1">
    <location>
        <position position="169"/>
    </location>
    <ligand>
        <name>ATP</name>
        <dbReference type="ChEBI" id="CHEBI:30616"/>
        <label>1</label>
    </ligand>
</feature>
<feature type="binding site" evidence="1">
    <location>
        <position position="175"/>
    </location>
    <ligand>
        <name>ATP</name>
        <dbReference type="ChEBI" id="CHEBI:30616"/>
        <label>1</label>
    </ligand>
</feature>
<feature type="binding site" evidence="1">
    <location>
        <position position="176"/>
    </location>
    <ligand>
        <name>ATP</name>
        <dbReference type="ChEBI" id="CHEBI:30616"/>
        <label>1</label>
    </ligand>
</feature>
<feature type="binding site" evidence="1">
    <location>
        <position position="208"/>
    </location>
    <ligand>
        <name>ATP</name>
        <dbReference type="ChEBI" id="CHEBI:30616"/>
        <label>1</label>
    </ligand>
</feature>
<feature type="binding site" evidence="1">
    <location>
        <position position="210"/>
    </location>
    <ligand>
        <name>ATP</name>
        <dbReference type="ChEBI" id="CHEBI:30616"/>
        <label>1</label>
    </ligand>
</feature>
<feature type="binding site" evidence="1">
    <location>
        <position position="215"/>
    </location>
    <ligand>
        <name>ATP</name>
        <dbReference type="ChEBI" id="CHEBI:30616"/>
        <label>1</label>
    </ligand>
</feature>
<feature type="binding site" evidence="1">
    <location>
        <position position="241"/>
    </location>
    <ligand>
        <name>ATP</name>
        <dbReference type="ChEBI" id="CHEBI:30616"/>
        <label>1</label>
    </ligand>
</feature>
<feature type="binding site" evidence="1">
    <location>
        <position position="242"/>
    </location>
    <ligand>
        <name>ATP</name>
        <dbReference type="ChEBI" id="CHEBI:30616"/>
        <label>1</label>
    </ligand>
</feature>
<feature type="binding site" evidence="1">
    <location>
        <position position="243"/>
    </location>
    <ligand>
        <name>ATP</name>
        <dbReference type="ChEBI" id="CHEBI:30616"/>
        <label>1</label>
    </ligand>
</feature>
<feature type="binding site" evidence="1">
    <location>
        <position position="284"/>
    </location>
    <ligand>
        <name>ATP</name>
        <dbReference type="ChEBI" id="CHEBI:30616"/>
        <label>1</label>
    </ligand>
</feature>
<feature type="binding site" evidence="1">
    <location>
        <position position="284"/>
    </location>
    <ligand>
        <name>Mg(2+)</name>
        <dbReference type="ChEBI" id="CHEBI:18420"/>
        <label>1</label>
    </ligand>
</feature>
<feature type="binding site" evidence="1">
    <location>
        <position position="284"/>
    </location>
    <ligand>
        <name>Mn(2+)</name>
        <dbReference type="ChEBI" id="CHEBI:29035"/>
        <label>1</label>
    </ligand>
</feature>
<feature type="binding site" evidence="1">
    <location>
        <position position="298"/>
    </location>
    <ligand>
        <name>ATP</name>
        <dbReference type="ChEBI" id="CHEBI:30616"/>
        <label>1</label>
    </ligand>
</feature>
<feature type="binding site" evidence="1">
    <location>
        <position position="298"/>
    </location>
    <ligand>
        <name>Mg(2+)</name>
        <dbReference type="ChEBI" id="CHEBI:18420"/>
        <label>1</label>
    </ligand>
</feature>
<feature type="binding site" evidence="1">
    <location>
        <position position="298"/>
    </location>
    <ligand>
        <name>Mg(2+)</name>
        <dbReference type="ChEBI" id="CHEBI:18420"/>
        <label>2</label>
    </ligand>
</feature>
<feature type="binding site" evidence="1">
    <location>
        <position position="298"/>
    </location>
    <ligand>
        <name>Mn(2+)</name>
        <dbReference type="ChEBI" id="CHEBI:29035"/>
        <label>1</label>
    </ligand>
</feature>
<feature type="binding site" evidence="1">
    <location>
        <position position="298"/>
    </location>
    <ligand>
        <name>Mn(2+)</name>
        <dbReference type="ChEBI" id="CHEBI:29035"/>
        <label>2</label>
    </ligand>
</feature>
<feature type="binding site" evidence="1">
    <location>
        <position position="300"/>
    </location>
    <ligand>
        <name>Mg(2+)</name>
        <dbReference type="ChEBI" id="CHEBI:18420"/>
        <label>2</label>
    </ligand>
</feature>
<feature type="binding site" evidence="1">
    <location>
        <position position="300"/>
    </location>
    <ligand>
        <name>Mn(2+)</name>
        <dbReference type="ChEBI" id="CHEBI:29035"/>
        <label>2</label>
    </ligand>
</feature>
<feature type="binding site" evidence="1">
    <location>
        <position position="707"/>
    </location>
    <ligand>
        <name>ATP</name>
        <dbReference type="ChEBI" id="CHEBI:30616"/>
        <label>2</label>
    </ligand>
</feature>
<feature type="binding site" evidence="1">
    <location>
        <position position="746"/>
    </location>
    <ligand>
        <name>ATP</name>
        <dbReference type="ChEBI" id="CHEBI:30616"/>
        <label>2</label>
    </ligand>
</feature>
<feature type="binding site" evidence="1">
    <location>
        <position position="752"/>
    </location>
    <ligand>
        <name>ATP</name>
        <dbReference type="ChEBI" id="CHEBI:30616"/>
        <label>2</label>
    </ligand>
</feature>
<feature type="binding site" evidence="1">
    <location>
        <position position="777"/>
    </location>
    <ligand>
        <name>ATP</name>
        <dbReference type="ChEBI" id="CHEBI:30616"/>
        <label>2</label>
    </ligand>
</feature>
<feature type="binding site" evidence="1">
    <location>
        <position position="778"/>
    </location>
    <ligand>
        <name>ATP</name>
        <dbReference type="ChEBI" id="CHEBI:30616"/>
        <label>2</label>
    </ligand>
</feature>
<feature type="binding site" evidence="1">
    <location>
        <position position="779"/>
    </location>
    <ligand>
        <name>ATP</name>
        <dbReference type="ChEBI" id="CHEBI:30616"/>
        <label>2</label>
    </ligand>
</feature>
<feature type="binding site" evidence="1">
    <location>
        <position position="780"/>
    </location>
    <ligand>
        <name>ATP</name>
        <dbReference type="ChEBI" id="CHEBI:30616"/>
        <label>2</label>
    </ligand>
</feature>
<feature type="binding site" evidence="1">
    <location>
        <position position="820"/>
    </location>
    <ligand>
        <name>ATP</name>
        <dbReference type="ChEBI" id="CHEBI:30616"/>
        <label>2</label>
    </ligand>
</feature>
<feature type="binding site" evidence="1">
    <location>
        <position position="820"/>
    </location>
    <ligand>
        <name>Mg(2+)</name>
        <dbReference type="ChEBI" id="CHEBI:18420"/>
        <label>3</label>
    </ligand>
</feature>
<feature type="binding site" evidence="1">
    <location>
        <position position="820"/>
    </location>
    <ligand>
        <name>Mn(2+)</name>
        <dbReference type="ChEBI" id="CHEBI:29035"/>
        <label>3</label>
    </ligand>
</feature>
<feature type="binding site" evidence="1">
    <location>
        <position position="832"/>
    </location>
    <ligand>
        <name>ATP</name>
        <dbReference type="ChEBI" id="CHEBI:30616"/>
        <label>2</label>
    </ligand>
</feature>
<feature type="binding site" evidence="1">
    <location>
        <position position="832"/>
    </location>
    <ligand>
        <name>Mg(2+)</name>
        <dbReference type="ChEBI" id="CHEBI:18420"/>
        <label>3</label>
    </ligand>
</feature>
<feature type="binding site" evidence="1">
    <location>
        <position position="832"/>
    </location>
    <ligand>
        <name>Mg(2+)</name>
        <dbReference type="ChEBI" id="CHEBI:18420"/>
        <label>4</label>
    </ligand>
</feature>
<feature type="binding site" evidence="1">
    <location>
        <position position="832"/>
    </location>
    <ligand>
        <name>Mn(2+)</name>
        <dbReference type="ChEBI" id="CHEBI:29035"/>
        <label>3</label>
    </ligand>
</feature>
<feature type="binding site" evidence="1">
    <location>
        <position position="832"/>
    </location>
    <ligand>
        <name>Mn(2+)</name>
        <dbReference type="ChEBI" id="CHEBI:29035"/>
        <label>4</label>
    </ligand>
</feature>
<feature type="binding site" evidence="1">
    <location>
        <position position="834"/>
    </location>
    <ligand>
        <name>Mg(2+)</name>
        <dbReference type="ChEBI" id="CHEBI:18420"/>
        <label>4</label>
    </ligand>
</feature>
<feature type="binding site" evidence="1">
    <location>
        <position position="834"/>
    </location>
    <ligand>
        <name>Mn(2+)</name>
        <dbReference type="ChEBI" id="CHEBI:29035"/>
        <label>4</label>
    </ligand>
</feature>
<comment type="function">
    <text evidence="1">Large subunit of the glutamine-dependent carbamoyl phosphate synthetase (CPSase). CPSase catalyzes the formation of carbamoyl phosphate from the ammonia moiety of glutamine, carbonate, and phosphate donated by ATP, constituting the first step of 2 biosynthetic pathways, one leading to arginine and/or urea and the other to pyrimidine nucleotides. The large subunit (synthetase) binds the substrates ammonia (free or transferred from glutamine from the small subunit), hydrogencarbonate and ATP and carries out an ATP-coupled ligase reaction, activating hydrogencarbonate by forming carboxy phosphate which reacts with ammonia to form carbamoyl phosphate.</text>
</comment>
<comment type="catalytic activity">
    <reaction evidence="1">
        <text>hydrogencarbonate + L-glutamine + 2 ATP + H2O = carbamoyl phosphate + L-glutamate + 2 ADP + phosphate + 2 H(+)</text>
        <dbReference type="Rhea" id="RHEA:18633"/>
        <dbReference type="ChEBI" id="CHEBI:15377"/>
        <dbReference type="ChEBI" id="CHEBI:15378"/>
        <dbReference type="ChEBI" id="CHEBI:17544"/>
        <dbReference type="ChEBI" id="CHEBI:29985"/>
        <dbReference type="ChEBI" id="CHEBI:30616"/>
        <dbReference type="ChEBI" id="CHEBI:43474"/>
        <dbReference type="ChEBI" id="CHEBI:58228"/>
        <dbReference type="ChEBI" id="CHEBI:58359"/>
        <dbReference type="ChEBI" id="CHEBI:456216"/>
        <dbReference type="EC" id="6.3.5.5"/>
    </reaction>
</comment>
<comment type="catalytic activity">
    <molecule>Carbamoyl phosphate synthase large chain</molecule>
    <reaction evidence="1">
        <text>hydrogencarbonate + NH4(+) + 2 ATP = carbamoyl phosphate + 2 ADP + phosphate + 2 H(+)</text>
        <dbReference type="Rhea" id="RHEA:18029"/>
        <dbReference type="ChEBI" id="CHEBI:15378"/>
        <dbReference type="ChEBI" id="CHEBI:17544"/>
        <dbReference type="ChEBI" id="CHEBI:28938"/>
        <dbReference type="ChEBI" id="CHEBI:30616"/>
        <dbReference type="ChEBI" id="CHEBI:43474"/>
        <dbReference type="ChEBI" id="CHEBI:58228"/>
        <dbReference type="ChEBI" id="CHEBI:456216"/>
        <dbReference type="EC" id="6.3.4.16"/>
    </reaction>
</comment>
<comment type="cofactor">
    <cofactor evidence="1">
        <name>Mg(2+)</name>
        <dbReference type="ChEBI" id="CHEBI:18420"/>
    </cofactor>
    <cofactor evidence="1">
        <name>Mn(2+)</name>
        <dbReference type="ChEBI" id="CHEBI:29035"/>
    </cofactor>
    <text evidence="1">Binds 4 Mg(2+) or Mn(2+) ions per subunit.</text>
</comment>
<comment type="pathway">
    <text evidence="1">Amino-acid biosynthesis; L-arginine biosynthesis; carbamoyl phosphate from bicarbonate: step 1/1.</text>
</comment>
<comment type="pathway">
    <text evidence="1">Pyrimidine metabolism; UMP biosynthesis via de novo pathway; (S)-dihydroorotate from bicarbonate: step 1/3.</text>
</comment>
<comment type="subunit">
    <text evidence="1">Composed of two chains; the small (or glutamine) chain promotes the hydrolysis of glutamine to ammonia, which is used by the large (or ammonia) chain to synthesize carbamoyl phosphate. Tetramer of heterodimers (alpha,beta)4.</text>
</comment>
<comment type="domain">
    <text evidence="1">The large subunit is composed of 2 ATP-grasp domains that are involved in binding the 2 ATP molecules needed for carbamoyl phosphate synthesis. The N-terminal ATP-grasp domain (referred to as the carboxyphosphate synthetic component) catalyzes the ATP-dependent phosphorylation of hydrogencarbonate to carboxyphosphate and the subsequent nucleophilic attack by ammonia to form a carbamate intermediate. The C-terminal ATP-grasp domain (referred to as the carbamoyl phosphate synthetic component) then catalyzes the phosphorylation of carbamate with the second ATP to form the end product carbamoyl phosphate. The reactive and unstable enzyme intermediates are sequentially channeled from one active site to the next through the interior of the protein over a distance of at least 96 A.</text>
</comment>
<comment type="similarity">
    <text evidence="1">Belongs to the CarB family.</text>
</comment>